<reference evidence="5" key="1">
    <citation type="journal article" date="1984" name="J. Bacteriol.">
        <title>Enzymatic and nucleotide sequence studies of a kanamycin-inactivating enzyme encoded by a plasmid from thermophilic bacilli in comparison with that encoded by plasmid pUB110.</title>
        <authorList>
            <person name="Matsumura M."/>
            <person name="Katakura Y."/>
            <person name="Imanaka T."/>
            <person name="Aiba S."/>
        </authorList>
    </citation>
    <scope>NUCLEOTIDE SEQUENCE [GENOMIC DNA]</scope>
    <scope>PROTEIN SEQUENCE OF 1-7</scope>
    <scope>FUNCTION</scope>
    <scope>CATALYTIC ACTIVITY</scope>
    <scope>BIOPHYSICOCHEMICAL PROPERTIES</scope>
    <source>
        <plasmid>pTB913</plasmid>
    </source>
</reference>
<reference evidence="6" key="2">
    <citation type="journal article" date="1986" name="Mol. Gen. Genet.">
        <title>Complete nucleotide sequences of Bacillus plasmids pUB110dB, pRBH1 and its copy mutants.</title>
        <authorList>
            <person name="Mueller R.E."/>
            <person name="Ano T."/>
            <person name="Imanaka T."/>
            <person name="Aiba S."/>
        </authorList>
    </citation>
    <scope>NUCLEOTIDE SEQUENCE [GENOMIC DNA]</scope>
    <source>
        <plasmid>pRBH1</plasmid>
    </source>
</reference>
<reference evidence="7" key="3">
    <citation type="journal article" date="1989" name="Nucleic Acids Res.">
        <title>Similarity of minus origins of replication and flanking open reading frames of plasmids pUB110, pTB913 and pMV158.</title>
        <authorList>
            <person name="van der Lelie D."/>
            <person name="Bron S."/>
            <person name="Venema G."/>
            <person name="Oskam L."/>
        </authorList>
    </citation>
    <scope>NUCLEOTIDE SEQUENCE [GENOMIC DNA]</scope>
    <source>
        <plasmid>pTB913</plasmid>
    </source>
</reference>
<organism>
    <name type="scientific">Bacillus sp</name>
    <dbReference type="NCBI Taxonomy" id="1409"/>
    <lineage>
        <taxon>Bacteria</taxon>
        <taxon>Bacillati</taxon>
        <taxon>Bacillota</taxon>
        <taxon>Bacilli</taxon>
        <taxon>Bacillales</taxon>
        <taxon>Bacillaceae</taxon>
        <taxon>Bacillus</taxon>
    </lineage>
</organism>
<accession>P05058</accession>
<proteinExistence type="evidence at protein level"/>
<sequence>MNGPIIMTREERMKIVHEIKERILDKYGDDVKAIGVYGSLGRQTDGPYSDIEMMCVMSTEEAEFSHEWTTGEWKVEVNFDSEEILLDYASQVESDWPLTHGQFFSILPIYDSGGYLEKVYQTAKSVEAQKFHDAICALIVEELFEYAGKWRNIRVQGPTTFLPSLTVQVAMAGAMLIGLHHRICYTTSASVLTEAVKQSDLPSGYDHLCQFVMSGQLSDSEKLLESLENFWNGIQEWTERHGYIVDVSKRIPF</sequence>
<gene>
    <name evidence="3" type="primary">knt</name>
    <name evidence="4" type="synonym">kan</name>
</gene>
<comment type="function">
    <text evidence="2">Inactivates aminoglycoside antibiotics such as kanamycin by catalyzing the transfer of a nucleotidyl group from nucleoside triphosphates such as (d)ATP to the 4'-hydroxyl group of the aminoglycoside.</text>
</comment>
<comment type="catalytic activity">
    <reaction evidence="2">
        <text>kanamycin A + ATP = 4'-adenylylkanamycin A + diphosphate</text>
        <dbReference type="Rhea" id="RHEA:83671"/>
        <dbReference type="ChEBI" id="CHEBI:30616"/>
        <dbReference type="ChEBI" id="CHEBI:33019"/>
        <dbReference type="ChEBI" id="CHEBI:58214"/>
        <dbReference type="ChEBI" id="CHEBI:233199"/>
    </reaction>
</comment>
<comment type="catalytic activity">
    <reaction evidence="1">
        <text>amikacin + ATP = 4'-adenylylamikacin + diphosphate</text>
        <dbReference type="Rhea" id="RHEA:83667"/>
        <dbReference type="ChEBI" id="CHEBI:30616"/>
        <dbReference type="ChEBI" id="CHEBI:33019"/>
        <dbReference type="ChEBI" id="CHEBI:84739"/>
        <dbReference type="ChEBI" id="CHEBI:233200"/>
    </reaction>
</comment>
<comment type="catalytic activity">
    <reaction evidence="1">
        <text>neomycin B + ATP = 4'-adenylylneomycin B + diphosphate</text>
        <dbReference type="Rhea" id="RHEA:83675"/>
        <dbReference type="ChEBI" id="CHEBI:30616"/>
        <dbReference type="ChEBI" id="CHEBI:33019"/>
        <dbReference type="ChEBI" id="CHEBI:87835"/>
        <dbReference type="ChEBI" id="CHEBI:233201"/>
    </reaction>
</comment>
<comment type="catalytic activity">
    <reaction evidence="1">
        <text>paromomycin + ATP = 4'-adenylylparomomycin + diphosphate</text>
        <dbReference type="Rhea" id="RHEA:83679"/>
        <dbReference type="ChEBI" id="CHEBI:30616"/>
        <dbReference type="ChEBI" id="CHEBI:33019"/>
        <dbReference type="ChEBI" id="CHEBI:233202"/>
        <dbReference type="ChEBI" id="CHEBI:233203"/>
    </reaction>
</comment>
<comment type="catalytic activity">
    <reaction evidence="1">
        <text>ribostamycin + ATP = 4'-adenylylribostamycin + diphosphate</text>
        <dbReference type="Rhea" id="RHEA:83683"/>
        <dbReference type="ChEBI" id="CHEBI:30616"/>
        <dbReference type="ChEBI" id="CHEBI:33019"/>
        <dbReference type="ChEBI" id="CHEBI:65028"/>
        <dbReference type="ChEBI" id="CHEBI:233204"/>
    </reaction>
</comment>
<comment type="catalytic activity">
    <reaction evidence="1">
        <text>tobramycin + ATP = 4'-adenylyltobramycin + diphosphate</text>
        <dbReference type="Rhea" id="RHEA:83687"/>
        <dbReference type="ChEBI" id="CHEBI:30616"/>
        <dbReference type="ChEBI" id="CHEBI:33019"/>
        <dbReference type="ChEBI" id="CHEBI:73678"/>
        <dbReference type="ChEBI" id="CHEBI:233205"/>
    </reaction>
</comment>
<comment type="catalytic activity">
    <reaction evidence="1">
        <text>kanamycin A + CTP = 4'-cytidylylkanamycin A + diphosphate</text>
        <dbReference type="Rhea" id="RHEA:83691"/>
        <dbReference type="ChEBI" id="CHEBI:33019"/>
        <dbReference type="ChEBI" id="CHEBI:37563"/>
        <dbReference type="ChEBI" id="CHEBI:58214"/>
        <dbReference type="ChEBI" id="CHEBI:233206"/>
    </reaction>
</comment>
<comment type="catalytic activity">
    <reaction evidence="1">
        <text>kanamycin A + GTP = 4'-guanylylkanamycin A + diphosphate</text>
        <dbReference type="Rhea" id="RHEA:83695"/>
        <dbReference type="ChEBI" id="CHEBI:33019"/>
        <dbReference type="ChEBI" id="CHEBI:37565"/>
        <dbReference type="ChEBI" id="CHEBI:58214"/>
        <dbReference type="ChEBI" id="CHEBI:233207"/>
    </reaction>
</comment>
<comment type="catalytic activity">
    <reaction evidence="1">
        <text>kanamycin A + ITP = 4'-inosinylylkanamycin A + diphosphate</text>
        <dbReference type="Rhea" id="RHEA:83699"/>
        <dbReference type="ChEBI" id="CHEBI:33019"/>
        <dbReference type="ChEBI" id="CHEBI:58214"/>
        <dbReference type="ChEBI" id="CHEBI:61402"/>
        <dbReference type="ChEBI" id="CHEBI:233208"/>
    </reaction>
</comment>
<comment type="catalytic activity">
    <reaction evidence="1">
        <text>dTTP + kanamycin A = 4'-thymidylylkanamycin A + diphosphate</text>
        <dbReference type="Rhea" id="RHEA:83703"/>
        <dbReference type="ChEBI" id="CHEBI:33019"/>
        <dbReference type="ChEBI" id="CHEBI:37568"/>
        <dbReference type="ChEBI" id="CHEBI:58214"/>
        <dbReference type="ChEBI" id="CHEBI:233209"/>
    </reaction>
</comment>
<comment type="catalytic activity">
    <reaction evidence="1">
        <text>kanamycin A + UTP = 4'-uridylylkanamycin A + diphosphate</text>
        <dbReference type="Rhea" id="RHEA:83707"/>
        <dbReference type="ChEBI" id="CHEBI:33019"/>
        <dbReference type="ChEBI" id="CHEBI:46398"/>
        <dbReference type="ChEBI" id="CHEBI:58214"/>
        <dbReference type="ChEBI" id="CHEBI:233210"/>
    </reaction>
</comment>
<comment type="catalytic activity">
    <reaction evidence="1">
        <text>kanamycin A + dATP = 4'-(2'-deoxyadenylyl)kanamycin A + diphosphate</text>
        <dbReference type="Rhea" id="RHEA:83711"/>
        <dbReference type="ChEBI" id="CHEBI:33019"/>
        <dbReference type="ChEBI" id="CHEBI:58214"/>
        <dbReference type="ChEBI" id="CHEBI:61404"/>
        <dbReference type="ChEBI" id="CHEBI:233246"/>
    </reaction>
</comment>
<comment type="catalytic activity">
    <reaction evidence="1">
        <text>kanamycin A + dCTP = 4'-(2'-deoxycytidylyl)kanamycin A + diphosphate</text>
        <dbReference type="Rhea" id="RHEA:83715"/>
        <dbReference type="ChEBI" id="CHEBI:33019"/>
        <dbReference type="ChEBI" id="CHEBI:58214"/>
        <dbReference type="ChEBI" id="CHEBI:61481"/>
        <dbReference type="ChEBI" id="CHEBI:233247"/>
    </reaction>
</comment>
<comment type="catalytic activity">
    <reaction evidence="1">
        <text>kanamycin A + dGTP = 4'-(2'-deoxyguanylyl)kanamycin A + diphosphate</text>
        <dbReference type="Rhea" id="RHEA:83719"/>
        <dbReference type="ChEBI" id="CHEBI:33019"/>
        <dbReference type="ChEBI" id="CHEBI:58214"/>
        <dbReference type="ChEBI" id="CHEBI:61429"/>
        <dbReference type="ChEBI" id="CHEBI:233248"/>
    </reaction>
</comment>
<comment type="catalytic activity">
    <reaction evidence="1">
        <text>dUTP + kanamycin A = 4'-(2'-deoxyuridylyl)kanamycin A + diphosphate</text>
        <dbReference type="Rhea" id="RHEA:83723"/>
        <dbReference type="ChEBI" id="CHEBI:33019"/>
        <dbReference type="ChEBI" id="CHEBI:58214"/>
        <dbReference type="ChEBI" id="CHEBI:61555"/>
        <dbReference type="ChEBI" id="CHEBI:233249"/>
    </reaction>
</comment>
<comment type="catalytic activity">
    <reaction evidence="1">
        <text>amikacin + GTP = 4'-guanylylamikacin + diphosphate</text>
        <dbReference type="Rhea" id="RHEA:83727"/>
        <dbReference type="ChEBI" id="CHEBI:33019"/>
        <dbReference type="ChEBI" id="CHEBI:37565"/>
        <dbReference type="ChEBI" id="CHEBI:84739"/>
        <dbReference type="ChEBI" id="CHEBI:233257"/>
    </reaction>
</comment>
<comment type="catalytic activity">
    <reaction evidence="1">
        <text>amikacin + ITP = 4'-inosinylylamikacin + diphosphate</text>
        <dbReference type="Rhea" id="RHEA:83731"/>
        <dbReference type="ChEBI" id="CHEBI:33019"/>
        <dbReference type="ChEBI" id="CHEBI:61402"/>
        <dbReference type="ChEBI" id="CHEBI:84739"/>
        <dbReference type="ChEBI" id="CHEBI:233259"/>
    </reaction>
</comment>
<comment type="catalytic activity">
    <reaction evidence="1">
        <text>amikacin + CTP = 4'-cytidylylamikacin + diphosphate</text>
        <dbReference type="Rhea" id="RHEA:83735"/>
        <dbReference type="ChEBI" id="CHEBI:33019"/>
        <dbReference type="ChEBI" id="CHEBI:37563"/>
        <dbReference type="ChEBI" id="CHEBI:84739"/>
        <dbReference type="ChEBI" id="CHEBI:233260"/>
    </reaction>
</comment>
<comment type="catalytic activity">
    <reaction evidence="1">
        <text>amikacin + UTP = 4'-uridylylamikacin + diphosphate</text>
        <dbReference type="Rhea" id="RHEA:83739"/>
        <dbReference type="ChEBI" id="CHEBI:33019"/>
        <dbReference type="ChEBI" id="CHEBI:46398"/>
        <dbReference type="ChEBI" id="CHEBI:84739"/>
        <dbReference type="ChEBI" id="CHEBI:233261"/>
    </reaction>
</comment>
<comment type="catalytic activity">
    <reaction evidence="1">
        <text>amikacin + dTTP = 4'-thymidylylamikacin + diphosphate</text>
        <dbReference type="Rhea" id="RHEA:83743"/>
        <dbReference type="ChEBI" id="CHEBI:33019"/>
        <dbReference type="ChEBI" id="CHEBI:37568"/>
        <dbReference type="ChEBI" id="CHEBI:84739"/>
        <dbReference type="ChEBI" id="CHEBI:233262"/>
    </reaction>
</comment>
<comment type="biophysicochemical properties">
    <temperatureDependence>
        <text evidence="2">Thermostable at 50 degrees Celsius for over 30 minutes, at 55 degrees Celsius for about 9 minutes.</text>
    </temperatureDependence>
</comment>
<comment type="subunit">
    <text evidence="1">Homodimer.</text>
</comment>
<comment type="sequence caution" evidence="2">
    <conflict type="erroneous initiation">
        <sequence resource="EMBL-CDS" id="CAA33715"/>
    </conflict>
    <text>Extended N-terminus.</text>
</comment>
<keyword id="KW-0046">Antibiotic resistance</keyword>
<keyword id="KW-0067">ATP-binding</keyword>
<keyword id="KW-0903">Direct protein sequencing</keyword>
<keyword id="KW-0547">Nucleotide-binding</keyword>
<keyword id="KW-0614">Plasmid</keyword>
<keyword id="KW-0808">Transferase</keyword>
<evidence type="ECO:0000250" key="1">
    <source>
        <dbReference type="UniProtKB" id="P05057"/>
    </source>
</evidence>
<evidence type="ECO:0000269" key="2">
    <source>
    </source>
</evidence>
<evidence type="ECO:0000303" key="3">
    <source>
    </source>
</evidence>
<evidence type="ECO:0000303" key="4">
    <source>
    </source>
</evidence>
<evidence type="ECO:0000312" key="5">
    <source>
        <dbReference type="EMBL" id="AAA92254.1"/>
    </source>
</evidence>
<evidence type="ECO:0000312" key="6">
    <source>
        <dbReference type="EMBL" id="CAA27144.1"/>
    </source>
</evidence>
<evidence type="ECO:0000312" key="7">
    <source>
        <dbReference type="EMBL" id="CAA33715.1"/>
    </source>
</evidence>
<dbReference type="EC" id="2.7.7.-" evidence="2"/>
<dbReference type="EMBL" id="K02551">
    <property type="protein sequence ID" value="AAA92254.1"/>
    <property type="molecule type" value="Genomic_DNA"/>
</dbReference>
<dbReference type="EMBL" id="X03409">
    <property type="protein sequence ID" value="CAA27144.1"/>
    <property type="molecule type" value="Genomic_DNA"/>
</dbReference>
<dbReference type="EMBL" id="X15670">
    <property type="protein sequence ID" value="CAA33715.1"/>
    <property type="status" value="ALT_INIT"/>
    <property type="molecule type" value="Genomic_DNA"/>
</dbReference>
<dbReference type="PIR" id="B24456">
    <property type="entry name" value="B24456"/>
</dbReference>
<dbReference type="SMR" id="P05058"/>
<dbReference type="CARD" id="ARO:3002623">
    <property type="molecule name" value="ANT(4')-Ia"/>
    <property type="mechanism identifier" value="ARO:0001004"/>
    <property type="mechanism name" value="antibiotic inactivation"/>
</dbReference>
<dbReference type="GO" id="GO:0016779">
    <property type="term" value="F:nucleotidyltransferase activity"/>
    <property type="evidence" value="ECO:0007669"/>
    <property type="project" value="InterPro"/>
</dbReference>
<dbReference type="GO" id="GO:0046677">
    <property type="term" value="P:response to antibiotic"/>
    <property type="evidence" value="ECO:0007669"/>
    <property type="project" value="UniProtKB-KW"/>
</dbReference>
<dbReference type="CDD" id="cd05397">
    <property type="entry name" value="NT_Pol-beta-like"/>
    <property type="match status" value="1"/>
</dbReference>
<dbReference type="Gene3D" id="3.30.460.10">
    <property type="entry name" value="Beta Polymerase, domain 2"/>
    <property type="match status" value="1"/>
</dbReference>
<dbReference type="Gene3D" id="1.20.120.330">
    <property type="entry name" value="Nucleotidyltransferases domain 2"/>
    <property type="match status" value="1"/>
</dbReference>
<dbReference type="InterPro" id="IPR012481">
    <property type="entry name" value="KNTase_C"/>
</dbReference>
<dbReference type="InterPro" id="IPR043519">
    <property type="entry name" value="NT_sf"/>
</dbReference>
<dbReference type="NCBIfam" id="NF033061">
    <property type="entry name" value="ANT_4p_I"/>
    <property type="match status" value="1"/>
</dbReference>
<dbReference type="NCBIfam" id="NF000181">
    <property type="entry name" value="ANT_4p_Ia"/>
    <property type="match status" value="1"/>
</dbReference>
<dbReference type="Pfam" id="PF07827">
    <property type="entry name" value="KNTase_C"/>
    <property type="match status" value="1"/>
</dbReference>
<dbReference type="SUPFAM" id="SSF81301">
    <property type="entry name" value="Nucleotidyltransferase"/>
    <property type="match status" value="1"/>
</dbReference>
<dbReference type="SUPFAM" id="SSF81593">
    <property type="entry name" value="Nucleotidyltransferase substrate binding subunit/domain"/>
    <property type="match status" value="1"/>
</dbReference>
<protein>
    <recommendedName>
        <fullName evidence="1">Aminoglycoside nucleotidyltransferase (4')</fullName>
        <shortName evidence="1">ANT(4')</shortName>
        <ecNumber evidence="2">2.7.7.-</ecNumber>
    </recommendedName>
    <alternativeName>
        <fullName evidence="4">Kanamycin nucleotidyltransferase</fullName>
        <shortName>KNTase</shortName>
    </alternativeName>
</protein>
<feature type="chain" id="PRO_0000068567" description="Aminoglycoside nucleotidyltransferase (4')">
    <location>
        <begin position="1"/>
        <end position="253"/>
    </location>
</feature>
<geneLocation type="plasmid">
    <name>pRBH1</name>
</geneLocation>
<geneLocation type="plasmid">
    <name>pTB913</name>
</geneLocation>
<name>KANU_BACSP</name>